<protein>
    <recommendedName>
        <fullName evidence="1">Gamma-glutamyl phosphate reductase</fullName>
        <shortName evidence="1">GPR</shortName>
        <ecNumber evidence="1">1.2.1.41</ecNumber>
    </recommendedName>
    <alternativeName>
        <fullName evidence="1">Glutamate-5-semialdehyde dehydrogenase</fullName>
    </alternativeName>
    <alternativeName>
        <fullName evidence="1">Glutamyl-gamma-semialdehyde dehydrogenase</fullName>
        <shortName evidence="1">GSA dehydrogenase</shortName>
    </alternativeName>
</protein>
<evidence type="ECO:0000255" key="1">
    <source>
        <dbReference type="HAMAP-Rule" id="MF_00412"/>
    </source>
</evidence>
<feature type="chain" id="PRO_1000080491" description="Gamma-glutamyl phosphate reductase">
    <location>
        <begin position="1"/>
        <end position="416"/>
    </location>
</feature>
<comment type="function">
    <text evidence="1">Catalyzes the NADPH-dependent reduction of L-glutamate 5-phosphate into L-glutamate 5-semialdehyde and phosphate. The product spontaneously undergoes cyclization to form 1-pyrroline-5-carboxylate.</text>
</comment>
<comment type="catalytic activity">
    <reaction evidence="1">
        <text>L-glutamate 5-semialdehyde + phosphate + NADP(+) = L-glutamyl 5-phosphate + NADPH + H(+)</text>
        <dbReference type="Rhea" id="RHEA:19541"/>
        <dbReference type="ChEBI" id="CHEBI:15378"/>
        <dbReference type="ChEBI" id="CHEBI:43474"/>
        <dbReference type="ChEBI" id="CHEBI:57783"/>
        <dbReference type="ChEBI" id="CHEBI:58066"/>
        <dbReference type="ChEBI" id="CHEBI:58274"/>
        <dbReference type="ChEBI" id="CHEBI:58349"/>
        <dbReference type="EC" id="1.2.1.41"/>
    </reaction>
</comment>
<comment type="pathway">
    <text evidence="1">Amino-acid biosynthesis; L-proline biosynthesis; L-glutamate 5-semialdehyde from L-glutamate: step 2/2.</text>
</comment>
<comment type="subcellular location">
    <subcellularLocation>
        <location evidence="1">Cytoplasm</location>
    </subcellularLocation>
</comment>
<comment type="similarity">
    <text evidence="1">Belongs to the gamma-glutamyl phosphate reductase family.</text>
</comment>
<reference key="1">
    <citation type="submission" date="2007-11" db="EMBL/GenBank/DDBJ databases">
        <authorList>
            <consortium name="The Salmonella enterica serovar Arizonae Genome Sequencing Project"/>
            <person name="McClelland M."/>
            <person name="Sanderson E.K."/>
            <person name="Porwollik S."/>
            <person name="Spieth J."/>
            <person name="Clifton W.S."/>
            <person name="Fulton R."/>
            <person name="Chunyan W."/>
            <person name="Wollam A."/>
            <person name="Shah N."/>
            <person name="Pepin K."/>
            <person name="Bhonagiri V."/>
            <person name="Nash W."/>
            <person name="Johnson M."/>
            <person name="Thiruvilangam P."/>
            <person name="Wilson R."/>
        </authorList>
    </citation>
    <scope>NUCLEOTIDE SEQUENCE [LARGE SCALE GENOMIC DNA]</scope>
    <source>
        <strain>ATCC BAA-731 / CDC346-86 / RSK2980</strain>
    </source>
</reference>
<name>PROA_SALAR</name>
<dbReference type="EC" id="1.2.1.41" evidence="1"/>
<dbReference type="EMBL" id="CP000880">
    <property type="protein sequence ID" value="ABX22546.1"/>
    <property type="molecule type" value="Genomic_DNA"/>
</dbReference>
<dbReference type="SMR" id="A9MNR4"/>
<dbReference type="STRING" id="41514.SARI_02690"/>
<dbReference type="KEGG" id="ses:SARI_02690"/>
<dbReference type="HOGENOM" id="CLU_030231_0_0_6"/>
<dbReference type="UniPathway" id="UPA00098">
    <property type="reaction ID" value="UER00360"/>
</dbReference>
<dbReference type="Proteomes" id="UP000002084">
    <property type="component" value="Chromosome"/>
</dbReference>
<dbReference type="GO" id="GO:0005737">
    <property type="term" value="C:cytoplasm"/>
    <property type="evidence" value="ECO:0007669"/>
    <property type="project" value="UniProtKB-SubCell"/>
</dbReference>
<dbReference type="GO" id="GO:0004350">
    <property type="term" value="F:glutamate-5-semialdehyde dehydrogenase activity"/>
    <property type="evidence" value="ECO:0007669"/>
    <property type="project" value="UniProtKB-UniRule"/>
</dbReference>
<dbReference type="GO" id="GO:0050661">
    <property type="term" value="F:NADP binding"/>
    <property type="evidence" value="ECO:0007669"/>
    <property type="project" value="InterPro"/>
</dbReference>
<dbReference type="GO" id="GO:0055129">
    <property type="term" value="P:L-proline biosynthetic process"/>
    <property type="evidence" value="ECO:0007669"/>
    <property type="project" value="UniProtKB-UniRule"/>
</dbReference>
<dbReference type="CDD" id="cd07079">
    <property type="entry name" value="ALDH_F18-19_ProA-GPR"/>
    <property type="match status" value="1"/>
</dbReference>
<dbReference type="FunFam" id="3.40.309.10:FF:000006">
    <property type="entry name" value="Gamma-glutamyl phosphate reductase"/>
    <property type="match status" value="1"/>
</dbReference>
<dbReference type="Gene3D" id="3.40.605.10">
    <property type="entry name" value="Aldehyde Dehydrogenase, Chain A, domain 1"/>
    <property type="match status" value="1"/>
</dbReference>
<dbReference type="Gene3D" id="3.40.309.10">
    <property type="entry name" value="Aldehyde Dehydrogenase, Chain A, domain 2"/>
    <property type="match status" value="1"/>
</dbReference>
<dbReference type="HAMAP" id="MF_00412">
    <property type="entry name" value="ProA"/>
    <property type="match status" value="1"/>
</dbReference>
<dbReference type="InterPro" id="IPR016161">
    <property type="entry name" value="Ald_DH/histidinol_DH"/>
</dbReference>
<dbReference type="InterPro" id="IPR016163">
    <property type="entry name" value="Ald_DH_C"/>
</dbReference>
<dbReference type="InterPro" id="IPR016162">
    <property type="entry name" value="Ald_DH_N"/>
</dbReference>
<dbReference type="InterPro" id="IPR015590">
    <property type="entry name" value="Aldehyde_DH_dom"/>
</dbReference>
<dbReference type="InterPro" id="IPR020593">
    <property type="entry name" value="G-glutamylP_reductase_CS"/>
</dbReference>
<dbReference type="InterPro" id="IPR012134">
    <property type="entry name" value="Glu-5-SA_DH"/>
</dbReference>
<dbReference type="InterPro" id="IPR000965">
    <property type="entry name" value="GPR_dom"/>
</dbReference>
<dbReference type="NCBIfam" id="NF001221">
    <property type="entry name" value="PRK00197.1"/>
    <property type="match status" value="1"/>
</dbReference>
<dbReference type="NCBIfam" id="TIGR00407">
    <property type="entry name" value="proA"/>
    <property type="match status" value="1"/>
</dbReference>
<dbReference type="PANTHER" id="PTHR11063:SF8">
    <property type="entry name" value="DELTA-1-PYRROLINE-5-CARBOXYLATE SYNTHASE"/>
    <property type="match status" value="1"/>
</dbReference>
<dbReference type="PANTHER" id="PTHR11063">
    <property type="entry name" value="GLUTAMATE SEMIALDEHYDE DEHYDROGENASE"/>
    <property type="match status" value="1"/>
</dbReference>
<dbReference type="Pfam" id="PF00171">
    <property type="entry name" value="Aldedh"/>
    <property type="match status" value="1"/>
</dbReference>
<dbReference type="PIRSF" id="PIRSF000151">
    <property type="entry name" value="GPR"/>
    <property type="match status" value="1"/>
</dbReference>
<dbReference type="SUPFAM" id="SSF53720">
    <property type="entry name" value="ALDH-like"/>
    <property type="match status" value="1"/>
</dbReference>
<dbReference type="PROSITE" id="PS01223">
    <property type="entry name" value="PROA"/>
    <property type="match status" value="1"/>
</dbReference>
<gene>
    <name evidence="1" type="primary">proA</name>
    <name type="ordered locus">SARI_02690</name>
</gene>
<organism>
    <name type="scientific">Salmonella arizonae (strain ATCC BAA-731 / CDC346-86 / RSK2980)</name>
    <dbReference type="NCBI Taxonomy" id="41514"/>
    <lineage>
        <taxon>Bacteria</taxon>
        <taxon>Pseudomonadati</taxon>
        <taxon>Pseudomonadota</taxon>
        <taxon>Gammaproteobacteria</taxon>
        <taxon>Enterobacterales</taxon>
        <taxon>Enterobacteriaceae</taxon>
        <taxon>Salmonella</taxon>
    </lineage>
</organism>
<proteinExistence type="inferred from homology"/>
<sequence length="416" mass="45155">MLEQMGIAAKAASYKLALLSSREKNRVLEKIADELESQTETILSANAQDVAQARENGLSDAMLDRLALTPARLKSIADDVRQVCHLTDPVGQVIDGGLLDSGLRLERRRVPLGVIGVIYEARPNVTVDVASLCLKTGNAVILRGGKETHRTNAATVRVIQKALKACGLPEAAVQAIDNPDRSLVNEMLRMDKYIDMLIPRGGAGLHKLCREQSTIPVITGGIGVCHIFVDSSAEIAPALEIIVNAKTQRPSTCNTVETLLVHQDIAERFLPVLSQQMAESDVTLHGDERVMQIMKGPAKRIPLKPEELDNEFLSLDLNVVMVMNIDHAINHIREHGTQHSDAILTCDMHNAARFVNEVDSAAVYVNASTRFTDGGQFGLGAEVAVSTQKLHARGPMGLEALTTYKWIGFGDGTIRA</sequence>
<keyword id="KW-0028">Amino-acid biosynthesis</keyword>
<keyword id="KW-0963">Cytoplasm</keyword>
<keyword id="KW-0521">NADP</keyword>
<keyword id="KW-0560">Oxidoreductase</keyword>
<keyword id="KW-0641">Proline biosynthesis</keyword>
<keyword id="KW-1185">Reference proteome</keyword>
<accession>A9MNR4</accession>